<name>YICR_SHIFL</name>
<evidence type="ECO:0000255" key="1">
    <source>
        <dbReference type="HAMAP-Rule" id="MF_00018"/>
    </source>
</evidence>
<evidence type="ECO:0000255" key="2">
    <source>
        <dbReference type="PROSITE-ProRule" id="PRU01182"/>
    </source>
</evidence>
<accession>P65959</accession>
<accession>Q8XDA3</accession>
<keyword id="KW-0378">Hydrolase</keyword>
<keyword id="KW-0479">Metal-binding</keyword>
<keyword id="KW-0482">Metalloprotease</keyword>
<keyword id="KW-0645">Protease</keyword>
<keyword id="KW-1185">Reference proteome</keyword>
<keyword id="KW-0862">Zinc</keyword>
<organism>
    <name type="scientific">Shigella flexneri</name>
    <dbReference type="NCBI Taxonomy" id="623"/>
    <lineage>
        <taxon>Bacteria</taxon>
        <taxon>Pseudomonadati</taxon>
        <taxon>Pseudomonadota</taxon>
        <taxon>Gammaproteobacteria</taxon>
        <taxon>Enterobacterales</taxon>
        <taxon>Enterobacteriaceae</taxon>
        <taxon>Shigella</taxon>
    </lineage>
</organism>
<proteinExistence type="inferred from homology"/>
<feature type="chain" id="PRO_0000190728" description="UPF0758 protein YicR">
    <location>
        <begin position="1"/>
        <end position="222"/>
    </location>
</feature>
<feature type="domain" description="MPN" evidence="2">
    <location>
        <begin position="100"/>
        <end position="222"/>
    </location>
</feature>
<feature type="short sequence motif" description="JAMM motif" evidence="2">
    <location>
        <begin position="171"/>
        <end position="184"/>
    </location>
</feature>
<feature type="binding site" evidence="2">
    <location>
        <position position="171"/>
    </location>
    <ligand>
        <name>Zn(2+)</name>
        <dbReference type="ChEBI" id="CHEBI:29105"/>
        <note>catalytic</note>
    </ligand>
</feature>
<feature type="binding site" evidence="2">
    <location>
        <position position="173"/>
    </location>
    <ligand>
        <name>Zn(2+)</name>
        <dbReference type="ChEBI" id="CHEBI:29105"/>
        <note>catalytic</note>
    </ligand>
</feature>
<feature type="binding site" evidence="2">
    <location>
        <position position="184"/>
    </location>
    <ligand>
        <name>Zn(2+)</name>
        <dbReference type="ChEBI" id="CHEBI:29105"/>
        <note>catalytic</note>
    </ligand>
</feature>
<protein>
    <recommendedName>
        <fullName evidence="1">UPF0758 protein YicR</fullName>
    </recommendedName>
</protein>
<comment type="similarity">
    <text evidence="1">Belongs to the UPF0758 family. YicR subfamily.</text>
</comment>
<gene>
    <name evidence="1" type="primary">yicR</name>
    <name type="ordered locus">SF3677</name>
    <name type="ordered locus">S4091</name>
</gene>
<sequence length="222" mass="25258">MKNNAQLLMPREKMLKFGISALTDVELLALFLRTGTRGKDVLTLAKEMLENFGSLYGLLTSEYEQFSGVHGIGVAKFAQLKGIAELARRYYNVRMREESPLLSPEMTREFLQSQLTGEEREIFMVIFLDSQHRVITHSRLFSGTLNHVEVHPREIIREAIKINASALILAHNHPSGCAEPSKADKLITERIIKSCQFMDLRVLDHIVIGRGEYVSFAERGWI</sequence>
<dbReference type="EMBL" id="AE005674">
    <property type="protein sequence ID" value="AAN45124.2"/>
    <property type="molecule type" value="Genomic_DNA"/>
</dbReference>
<dbReference type="EMBL" id="AE014073">
    <property type="protein sequence ID" value="AAP19068.1"/>
    <property type="molecule type" value="Genomic_DNA"/>
</dbReference>
<dbReference type="SMR" id="P65959"/>
<dbReference type="STRING" id="198214.SF3677"/>
<dbReference type="PaxDb" id="198214-SF3677"/>
<dbReference type="KEGG" id="sfl:SF3677"/>
<dbReference type="KEGG" id="sfx:S4091"/>
<dbReference type="PATRIC" id="fig|198214.7.peg.4340"/>
<dbReference type="HOGENOM" id="CLU_073529_0_1_6"/>
<dbReference type="Proteomes" id="UP000001006">
    <property type="component" value="Chromosome"/>
</dbReference>
<dbReference type="Proteomes" id="UP000002673">
    <property type="component" value="Chromosome"/>
</dbReference>
<dbReference type="GO" id="GO:0046872">
    <property type="term" value="F:metal ion binding"/>
    <property type="evidence" value="ECO:0007669"/>
    <property type="project" value="UniProtKB-KW"/>
</dbReference>
<dbReference type="GO" id="GO:0008237">
    <property type="term" value="F:metallopeptidase activity"/>
    <property type="evidence" value="ECO:0007669"/>
    <property type="project" value="UniProtKB-KW"/>
</dbReference>
<dbReference type="GO" id="GO:0006508">
    <property type="term" value="P:proteolysis"/>
    <property type="evidence" value="ECO:0007669"/>
    <property type="project" value="UniProtKB-KW"/>
</dbReference>
<dbReference type="CDD" id="cd08071">
    <property type="entry name" value="MPN_DUF2466"/>
    <property type="match status" value="1"/>
</dbReference>
<dbReference type="Gene3D" id="3.40.140.10">
    <property type="entry name" value="Cytidine Deaminase, domain 2"/>
    <property type="match status" value="1"/>
</dbReference>
<dbReference type="HAMAP" id="MF_00018">
    <property type="entry name" value="UPF0758_YicR"/>
    <property type="match status" value="1"/>
</dbReference>
<dbReference type="InterPro" id="IPR037518">
    <property type="entry name" value="MPN"/>
</dbReference>
<dbReference type="InterPro" id="IPR025657">
    <property type="entry name" value="RadC_JAB"/>
</dbReference>
<dbReference type="InterPro" id="IPR010994">
    <property type="entry name" value="RuvA_2-like"/>
</dbReference>
<dbReference type="InterPro" id="IPR001405">
    <property type="entry name" value="UPF0758"/>
</dbReference>
<dbReference type="InterPro" id="IPR020891">
    <property type="entry name" value="UPF0758_CS"/>
</dbReference>
<dbReference type="InterPro" id="IPR046778">
    <property type="entry name" value="UPF0758_N"/>
</dbReference>
<dbReference type="InterPro" id="IPR022820">
    <property type="entry name" value="UPF0758_YicR"/>
</dbReference>
<dbReference type="NCBIfam" id="NF000642">
    <property type="entry name" value="PRK00024.1"/>
    <property type="match status" value="1"/>
</dbReference>
<dbReference type="NCBIfam" id="TIGR00608">
    <property type="entry name" value="radc"/>
    <property type="match status" value="1"/>
</dbReference>
<dbReference type="PANTHER" id="PTHR30471">
    <property type="entry name" value="DNA REPAIR PROTEIN RADC"/>
    <property type="match status" value="1"/>
</dbReference>
<dbReference type="PANTHER" id="PTHR30471:SF3">
    <property type="entry name" value="UPF0758 PROTEIN YEES-RELATED"/>
    <property type="match status" value="1"/>
</dbReference>
<dbReference type="Pfam" id="PF04002">
    <property type="entry name" value="RadC"/>
    <property type="match status" value="1"/>
</dbReference>
<dbReference type="Pfam" id="PF20582">
    <property type="entry name" value="UPF0758_N"/>
    <property type="match status" value="1"/>
</dbReference>
<dbReference type="SUPFAM" id="SSF47781">
    <property type="entry name" value="RuvA domain 2-like"/>
    <property type="match status" value="1"/>
</dbReference>
<dbReference type="PROSITE" id="PS50249">
    <property type="entry name" value="MPN"/>
    <property type="match status" value="1"/>
</dbReference>
<dbReference type="PROSITE" id="PS01302">
    <property type="entry name" value="UPF0758"/>
    <property type="match status" value="1"/>
</dbReference>
<reference key="1">
    <citation type="journal article" date="2002" name="Nucleic Acids Res.">
        <title>Genome sequence of Shigella flexneri 2a: insights into pathogenicity through comparison with genomes of Escherichia coli K12 and O157.</title>
        <authorList>
            <person name="Jin Q."/>
            <person name="Yuan Z."/>
            <person name="Xu J."/>
            <person name="Wang Y."/>
            <person name="Shen Y."/>
            <person name="Lu W."/>
            <person name="Wang J."/>
            <person name="Liu H."/>
            <person name="Yang J."/>
            <person name="Yang F."/>
            <person name="Zhang X."/>
            <person name="Zhang J."/>
            <person name="Yang G."/>
            <person name="Wu H."/>
            <person name="Qu D."/>
            <person name="Dong J."/>
            <person name="Sun L."/>
            <person name="Xue Y."/>
            <person name="Zhao A."/>
            <person name="Gao Y."/>
            <person name="Zhu J."/>
            <person name="Kan B."/>
            <person name="Ding K."/>
            <person name="Chen S."/>
            <person name="Cheng H."/>
            <person name="Yao Z."/>
            <person name="He B."/>
            <person name="Chen R."/>
            <person name="Ma D."/>
            <person name="Qiang B."/>
            <person name="Wen Y."/>
            <person name="Hou Y."/>
            <person name="Yu J."/>
        </authorList>
    </citation>
    <scope>NUCLEOTIDE SEQUENCE [LARGE SCALE GENOMIC DNA]</scope>
    <source>
        <strain>301 / Serotype 2a</strain>
    </source>
</reference>
<reference key="2">
    <citation type="journal article" date="2003" name="Infect. Immun.">
        <title>Complete genome sequence and comparative genomics of Shigella flexneri serotype 2a strain 2457T.</title>
        <authorList>
            <person name="Wei J."/>
            <person name="Goldberg M.B."/>
            <person name="Burland V."/>
            <person name="Venkatesan M.M."/>
            <person name="Deng W."/>
            <person name="Fournier G."/>
            <person name="Mayhew G.F."/>
            <person name="Plunkett G. III"/>
            <person name="Rose D.J."/>
            <person name="Darling A."/>
            <person name="Mau B."/>
            <person name="Perna N.T."/>
            <person name="Payne S.M."/>
            <person name="Runyen-Janecky L.J."/>
            <person name="Zhou S."/>
            <person name="Schwartz D.C."/>
            <person name="Blattner F.R."/>
        </authorList>
    </citation>
    <scope>NUCLEOTIDE SEQUENCE [LARGE SCALE GENOMIC DNA]</scope>
    <source>
        <strain>ATCC 700930 / 2457T / Serotype 2a</strain>
    </source>
</reference>